<organism>
    <name type="scientific">Caenorhabditis briggsae</name>
    <dbReference type="NCBI Taxonomy" id="6238"/>
    <lineage>
        <taxon>Eukaryota</taxon>
        <taxon>Metazoa</taxon>
        <taxon>Ecdysozoa</taxon>
        <taxon>Nematoda</taxon>
        <taxon>Chromadorea</taxon>
        <taxon>Rhabditida</taxon>
        <taxon>Rhabditina</taxon>
        <taxon>Rhabditomorpha</taxon>
        <taxon>Rhabditoidea</taxon>
        <taxon>Rhabditidae</taxon>
        <taxon>Peloderinae</taxon>
        <taxon>Caenorhabditis</taxon>
    </lineage>
</organism>
<sequence>MQFSIVYFLVFLIPSTQSTGFLSLKLTSDHDCLVHLEIQSMEYSETVRLLAYETKSLEIFTPEITNQLSIHFQILHHFSGVSLSDVSSQLFKLDNNGIWEPRVIDSDQVILSIQSNFHCQKGFYGPICERRSRSTSTIKTTTSIPTATSSPFHLPISEVQINNLIIYAVLSSVVLLLIIANCFLCFCRPKPSKYIDYTFQNVFPMDEFFPMEKTIGSPDTEYFDSSSRYYSTITLQSRV</sequence>
<evidence type="ECO:0000250" key="1">
    <source>
        <dbReference type="UniProtKB" id="P34259"/>
    </source>
</evidence>
<comment type="function">
    <text evidence="1">May have a role in mesendoderm development during embryogenesis.</text>
</comment>
<feature type="chain" id="PRO_0000279716" description="Skn-1 dependent zygotic transcript 1 protein">
    <location>
        <begin position="1"/>
        <end position="239"/>
    </location>
</feature>
<accession>Q61QT3</accession>
<accession>A8X3A6</accession>
<protein>
    <recommendedName>
        <fullName>Skn-1 dependent zygotic transcript 1 protein</fullName>
    </recommendedName>
</protein>
<name>SDZ1_CAEBR</name>
<gene>
    <name evidence="1" type="primary">sdz-1.2</name>
    <name type="ORF">CBG06889</name>
</gene>
<reference key="1">
    <citation type="journal article" date="2003" name="PLoS Biol.">
        <title>The genome sequence of Caenorhabditis briggsae: a platform for comparative genomics.</title>
        <authorList>
            <person name="Stein L.D."/>
            <person name="Bao Z."/>
            <person name="Blasiar D."/>
            <person name="Blumenthal T."/>
            <person name="Brent M.R."/>
            <person name="Chen N."/>
            <person name="Chinwalla A."/>
            <person name="Clarke L."/>
            <person name="Clee C."/>
            <person name="Coghlan A."/>
            <person name="Coulson A."/>
            <person name="D'Eustachio P."/>
            <person name="Fitch D.H.A."/>
            <person name="Fulton L.A."/>
            <person name="Fulton R.E."/>
            <person name="Griffiths-Jones S."/>
            <person name="Harris T.W."/>
            <person name="Hillier L.W."/>
            <person name="Kamath R."/>
            <person name="Kuwabara P.E."/>
            <person name="Mardis E.R."/>
            <person name="Marra M.A."/>
            <person name="Miner T.L."/>
            <person name="Minx P."/>
            <person name="Mullikin J.C."/>
            <person name="Plumb R.W."/>
            <person name="Rogers J."/>
            <person name="Schein J.E."/>
            <person name="Sohrmann M."/>
            <person name="Spieth J."/>
            <person name="Stajich J.E."/>
            <person name="Wei C."/>
            <person name="Willey D."/>
            <person name="Wilson R.K."/>
            <person name="Durbin R.M."/>
            <person name="Waterston R.H."/>
        </authorList>
    </citation>
    <scope>NUCLEOTIDE SEQUENCE [LARGE SCALE GENOMIC DNA]</scope>
    <source>
        <strain>AF16</strain>
    </source>
</reference>
<keyword id="KW-0217">Developmental protein</keyword>
<keyword id="KW-1185">Reference proteome</keyword>
<dbReference type="EMBL" id="HE601347">
    <property type="protein sequence ID" value="CAP27116.1"/>
    <property type="molecule type" value="Genomic_DNA"/>
</dbReference>
<dbReference type="SMR" id="Q61QT3"/>
<dbReference type="FunCoup" id="Q61QT3">
    <property type="interactions" value="1362"/>
</dbReference>
<dbReference type="STRING" id="6238.Q61QT3"/>
<dbReference type="EnsemblMetazoa" id="CBG06889.1">
    <property type="protein sequence ID" value="CBG06889.1"/>
    <property type="gene ID" value="WBGene00029083"/>
</dbReference>
<dbReference type="KEGG" id="cbr:CBG_06889"/>
<dbReference type="CTD" id="8584467"/>
<dbReference type="WormBase" id="CBG06889">
    <property type="protein sequence ID" value="CBP07502"/>
    <property type="gene ID" value="WBGene00029083"/>
    <property type="gene designation" value="Cbr-sdz-1.2"/>
</dbReference>
<dbReference type="eggNOG" id="ENOG502R7JM">
    <property type="taxonomic scope" value="Eukaryota"/>
</dbReference>
<dbReference type="HOGENOM" id="CLU_1166781_0_0_1"/>
<dbReference type="InParanoid" id="Q61QT3"/>
<dbReference type="OMA" id="VFCIDEY"/>
<dbReference type="Proteomes" id="UP000008549">
    <property type="component" value="Unassembled WGS sequence"/>
</dbReference>
<dbReference type="GO" id="GO:0048382">
    <property type="term" value="P:mesendoderm development"/>
    <property type="evidence" value="ECO:0000250"/>
    <property type="project" value="UniProtKB"/>
</dbReference>
<dbReference type="InterPro" id="IPR053132">
    <property type="entry name" value="Mesendoderm_Regulator"/>
</dbReference>
<dbReference type="PANTHER" id="PTHR35855">
    <property type="entry name" value="PROTEIN CBG11437-RELATED"/>
    <property type="match status" value="1"/>
</dbReference>
<dbReference type="PANTHER" id="PTHR35855:SF2">
    <property type="entry name" value="SKN-1 DEPENDENT ZYGOTIC TRANSCRIPT 1 PROTEIN"/>
    <property type="match status" value="1"/>
</dbReference>
<proteinExistence type="inferred from homology"/>